<protein>
    <recommendedName>
        <fullName>Delta-1-pyrroline-5-carboxylate dehydrogenase, mitochondrial</fullName>
        <shortName>P5C dehydrogenase</shortName>
        <ecNumber>1.2.1.88</ecNumber>
    </recommendedName>
    <alternativeName>
        <fullName>Aldehyde dehydrogenase family 4 member A1</fullName>
    </alternativeName>
    <alternativeName>
        <fullName>L-glutamate gamma-semialdehyde dehydrogenase</fullName>
    </alternativeName>
</protein>
<sequence length="562" mass="61841">MLPLPSLRRSLLSHAWRGAGLRWKHTSSLKVTNEPILAFSQGSPERDALQKALKDLKGQMEAIPCVVGDEEVWTSDIQYQLSPFNHAHKVAKFCYADKALLNRAIDAALAARKEWDLKPMADRAQVFLKAADMLSGPRRAEVLAKTMVGQGKTVIQAEIDAAAELIDFFRFNAKFAVELEGEQPISVPPSTNHTVYRGLEGFVAAISPFNFTAIGGNLAGAPALMGNVVLWKPSDTAMLASYAVYRILREAGLPPNIIQFVPADGPTFGDTVTSSEHLCGINFTGSVPTFKHLWRQVAQNLDRFRTFPRLAGECGGKNFHFVHSSADVDSVVSGTLRSAFEYGGQKCSACSRLYVPKSLWPQIKGRLLEEHSRIKVGDPAEDFGTFFSAVIDAKAFARIKKWLEHARSSPSLSILAGGQCNESVGYYVEPCIIESKDPQEPIMKEEIFGPVLTVYVYPDDKYRETLQLVDSTTSYGLTGAVFAQDKAIVQEATRMLRNAAGNFYINDKSTGSVVGQQPFGGARASGTNDKPGGPHYILRWTSPQVIKETHKPLGDWRYSYMQ</sequence>
<feature type="transit peptide" description="Mitochondrion" evidence="1">
    <location>
        <begin position="1"/>
        <end position="23"/>
    </location>
</feature>
<feature type="chain" id="PRO_0000007174" description="Delta-1-pyrroline-5-carboxylate dehydrogenase, mitochondrial">
    <location>
        <begin position="24"/>
        <end position="562"/>
    </location>
</feature>
<feature type="active site" description="Proton acceptor" evidence="3 4 5">
    <location>
        <position position="313"/>
    </location>
</feature>
<feature type="active site" description="Nucleophile" evidence="3 4 5">
    <location>
        <position position="347"/>
    </location>
</feature>
<feature type="binding site">
    <location>
        <position position="207"/>
    </location>
    <ligand>
        <name>NAD(+)</name>
        <dbReference type="ChEBI" id="CHEBI:57540"/>
    </ligand>
</feature>
<feature type="binding site">
    <location>
        <position position="232"/>
    </location>
    <ligand>
        <name>NAD(+)</name>
        <dbReference type="ChEBI" id="CHEBI:57540"/>
    </ligand>
</feature>
<feature type="binding site">
    <location>
        <begin position="285"/>
        <end position="289"/>
    </location>
    <ligand>
        <name>NAD(+)</name>
        <dbReference type="ChEBI" id="CHEBI:57540"/>
    </ligand>
</feature>
<feature type="binding site">
    <location>
        <position position="446"/>
    </location>
    <ligand>
        <name>NAD(+)</name>
        <dbReference type="ChEBI" id="CHEBI:57540"/>
    </ligand>
</feature>
<feature type="binding site">
    <location>
        <position position="512"/>
    </location>
    <ligand>
        <name>substrate</name>
    </ligand>
</feature>
<feature type="site" description="Transition state stabilizer" evidence="1">
    <location>
        <position position="210"/>
    </location>
</feature>
<feature type="modified residue" description="N6-succinyllysine" evidence="8">
    <location>
        <position position="30"/>
    </location>
</feature>
<feature type="modified residue" description="Phosphoserine" evidence="2">
    <location>
        <position position="43"/>
    </location>
</feature>
<feature type="modified residue" description="N6-acetyllysine" evidence="7">
    <location>
        <position position="51"/>
    </location>
</feature>
<feature type="modified residue" description="N6-acetyllysine; alternate" evidence="7">
    <location>
        <position position="92"/>
    </location>
</feature>
<feature type="modified residue" description="N6-succinyllysine; alternate" evidence="8">
    <location>
        <position position="92"/>
    </location>
</feature>
<feature type="modified residue" description="N6-acetyllysine; alternate" evidence="7">
    <location>
        <position position="98"/>
    </location>
</feature>
<feature type="modified residue" description="N6-succinyllysine; alternate" evidence="8">
    <location>
        <position position="98"/>
    </location>
</feature>
<feature type="modified residue" description="N6-acetyllysine; alternate" evidence="7">
    <location>
        <position position="113"/>
    </location>
</feature>
<feature type="modified residue" description="N6-succinyllysine; alternate" evidence="8">
    <location>
        <position position="113"/>
    </location>
</feature>
<feature type="modified residue" description="N6-acetyllysine; alternate" evidence="7">
    <location>
        <position position="129"/>
    </location>
</feature>
<feature type="modified residue" description="N6-succinyllysine; alternate" evidence="8">
    <location>
        <position position="129"/>
    </location>
</feature>
<feature type="modified residue" description="N6-acetyllysine; alternate" evidence="7">
    <location>
        <position position="174"/>
    </location>
</feature>
<feature type="modified residue" description="N6-succinyllysine; alternate" evidence="8">
    <location>
        <position position="174"/>
    </location>
</feature>
<feature type="modified residue" description="N6-acetyllysine" evidence="7">
    <location>
        <position position="317"/>
    </location>
</feature>
<feature type="modified residue" description="N6-succinyllysine" evidence="8">
    <location>
        <position position="346"/>
    </location>
</feature>
<feature type="modified residue" description="N6-acetyllysine; alternate" evidence="7">
    <location>
        <position position="357"/>
    </location>
</feature>
<feature type="modified residue" description="N6-succinyllysine; alternate" evidence="8">
    <location>
        <position position="357"/>
    </location>
</feature>
<feature type="modified residue" description="N6-acetyllysine" evidence="7">
    <location>
        <position position="364"/>
    </location>
</feature>
<feature type="modified residue" description="N6-acetyllysine" evidence="7">
    <location>
        <position position="375"/>
    </location>
</feature>
<feature type="modified residue" description="N6-succinyllysine" evidence="8">
    <location>
        <position position="394"/>
    </location>
</feature>
<feature type="modified residue" description="N6-acetyllysine" evidence="7">
    <location>
        <position position="461"/>
    </location>
</feature>
<feature type="modified residue" description="N6-acetyllysine; alternate" evidence="7">
    <location>
        <position position="508"/>
    </location>
</feature>
<feature type="modified residue" description="N6-succinyllysine; alternate" evidence="8">
    <location>
        <position position="508"/>
    </location>
</feature>
<feature type="modified residue" description="N6-acetyllysine" evidence="7">
    <location>
        <position position="530"/>
    </location>
</feature>
<feature type="modified residue" description="N6-acetyllysine" evidence="7">
    <location>
        <position position="551"/>
    </location>
</feature>
<feature type="sequence conflict" description="In Ref. 1; BAC32045 and 4; AAH56226/AAH39281/AAH24133." evidence="6" ref="1 4">
    <original>G</original>
    <variation>S</variation>
    <location>
        <position position="18"/>
    </location>
</feature>
<feature type="sequence conflict" description="In Ref. 1; BAC32045 and 4; AAH56226/AAH39281/AAH24133." evidence="6" ref="1 4">
    <original>T</original>
    <variation>A</variation>
    <location>
        <position position="32"/>
    </location>
</feature>
<feature type="sequence conflict" description="In Ref. 1; BAC32045." evidence="6" ref="1">
    <original>D</original>
    <variation>G</variation>
    <location>
        <position position="47"/>
    </location>
</feature>
<feature type="sequence conflict" description="In Ref. 1; BAC32045 and 4; AAH56226/AAH39281/AAH24133." evidence="6" ref="1 4">
    <original>M</original>
    <variation>T</variation>
    <location>
        <position position="60"/>
    </location>
</feature>
<feature type="sequence conflict" description="In Ref. 1; BAC32045 and 4; AAH56226/AAH39281/AAH24133/AAH26589." evidence="6" ref="1 4">
    <original>Q</original>
    <variation>K</variation>
    <location>
        <position position="467"/>
    </location>
</feature>
<feature type="helix" evidence="10">
    <location>
        <begin position="44"/>
        <end position="54"/>
    </location>
</feature>
<feature type="turn" evidence="10">
    <location>
        <begin position="55"/>
        <end position="58"/>
    </location>
</feature>
<feature type="strand" evidence="10">
    <location>
        <begin position="65"/>
        <end position="67"/>
    </location>
</feature>
<feature type="strand" evidence="10">
    <location>
        <begin position="70"/>
        <end position="72"/>
    </location>
</feature>
<feature type="strand" evidence="10">
    <location>
        <begin position="77"/>
        <end position="82"/>
    </location>
</feature>
<feature type="strand" evidence="10">
    <location>
        <begin position="85"/>
        <end position="94"/>
    </location>
</feature>
<feature type="helix" evidence="10">
    <location>
        <begin position="98"/>
        <end position="117"/>
    </location>
</feature>
<feature type="helix" evidence="10">
    <location>
        <begin position="120"/>
        <end position="135"/>
    </location>
</feature>
<feature type="turn" evidence="10">
    <location>
        <begin position="136"/>
        <end position="138"/>
    </location>
</feature>
<feature type="helix" evidence="10">
    <location>
        <begin position="139"/>
        <end position="150"/>
    </location>
</feature>
<feature type="helix" evidence="10">
    <location>
        <begin position="154"/>
        <end position="160"/>
    </location>
</feature>
<feature type="helix" evidence="10">
    <location>
        <begin position="163"/>
        <end position="179"/>
    </location>
</feature>
<feature type="strand" evidence="10">
    <location>
        <begin position="190"/>
        <end position="195"/>
    </location>
</feature>
<feature type="strand" evidence="10">
    <location>
        <begin position="200"/>
        <end position="206"/>
    </location>
</feature>
<feature type="helix" evidence="10">
    <location>
        <begin position="212"/>
        <end position="224"/>
    </location>
</feature>
<feature type="strand" evidence="10">
    <location>
        <begin position="229"/>
        <end position="232"/>
    </location>
</feature>
<feature type="helix" evidence="10">
    <location>
        <begin position="235"/>
        <end position="237"/>
    </location>
</feature>
<feature type="helix" evidence="10">
    <location>
        <begin position="238"/>
        <end position="250"/>
    </location>
</feature>
<feature type="strand" evidence="10">
    <location>
        <begin position="257"/>
        <end position="260"/>
    </location>
</feature>
<feature type="helix" evidence="10">
    <location>
        <begin position="265"/>
        <end position="272"/>
    </location>
</feature>
<feature type="strand" evidence="10">
    <location>
        <begin position="278"/>
        <end position="285"/>
    </location>
</feature>
<feature type="helix" evidence="10">
    <location>
        <begin position="287"/>
        <end position="299"/>
    </location>
</feature>
<feature type="turn" evidence="10">
    <location>
        <begin position="300"/>
        <end position="303"/>
    </location>
</feature>
<feature type="strand" evidence="10">
    <location>
        <begin position="309"/>
        <end position="313"/>
    </location>
</feature>
<feature type="strand" evidence="10">
    <location>
        <begin position="318"/>
        <end position="322"/>
    </location>
</feature>
<feature type="helix" evidence="10">
    <location>
        <begin position="328"/>
        <end position="340"/>
    </location>
</feature>
<feature type="helix" evidence="10">
    <location>
        <begin position="341"/>
        <end position="344"/>
    </location>
</feature>
<feature type="strand" evidence="10">
    <location>
        <begin position="350"/>
        <end position="356"/>
    </location>
</feature>
<feature type="helix" evidence="10">
    <location>
        <begin position="357"/>
        <end position="359"/>
    </location>
</feature>
<feature type="helix" evidence="10">
    <location>
        <begin position="360"/>
        <end position="372"/>
    </location>
</feature>
<feature type="turn" evidence="10">
    <location>
        <begin position="379"/>
        <end position="381"/>
    </location>
</feature>
<feature type="helix" evidence="10">
    <location>
        <begin position="393"/>
        <end position="408"/>
    </location>
</feature>
<feature type="strand" evidence="10">
    <location>
        <begin position="412"/>
        <end position="416"/>
    </location>
</feature>
<feature type="strand" evidence="10">
    <location>
        <begin position="423"/>
        <end position="425"/>
    </location>
</feature>
<feature type="strand" evidence="10">
    <location>
        <begin position="431"/>
        <end position="436"/>
    </location>
</feature>
<feature type="helix" evidence="10">
    <location>
        <begin position="441"/>
        <end position="443"/>
    </location>
</feature>
<feature type="strand" evidence="10">
    <location>
        <begin position="449"/>
        <end position="457"/>
    </location>
</feature>
<feature type="helix" evidence="10">
    <location>
        <begin position="459"/>
        <end position="461"/>
    </location>
</feature>
<feature type="helix" evidence="10">
    <location>
        <begin position="462"/>
        <end position="471"/>
    </location>
</feature>
<feature type="strand" evidence="10">
    <location>
        <begin position="472"/>
        <end position="482"/>
    </location>
</feature>
<feature type="helix" evidence="10">
    <location>
        <begin position="486"/>
        <end position="495"/>
    </location>
</feature>
<feature type="turn" evidence="10">
    <location>
        <begin position="496"/>
        <end position="499"/>
    </location>
</feature>
<feature type="strand" evidence="10">
    <location>
        <begin position="501"/>
        <end position="507"/>
    </location>
</feature>
<feature type="turn" evidence="10">
    <location>
        <begin position="514"/>
        <end position="516"/>
    </location>
</feature>
<feature type="helix" evidence="10">
    <location>
        <begin position="536"/>
        <end position="540"/>
    </location>
</feature>
<feature type="strand" evidence="10">
    <location>
        <begin position="544"/>
        <end position="549"/>
    </location>
</feature>
<feature type="helix" evidence="9">
    <location>
        <begin position="559"/>
        <end position="561"/>
    </location>
</feature>
<organism>
    <name type="scientific">Mus musculus</name>
    <name type="common">Mouse</name>
    <dbReference type="NCBI Taxonomy" id="10090"/>
    <lineage>
        <taxon>Eukaryota</taxon>
        <taxon>Metazoa</taxon>
        <taxon>Chordata</taxon>
        <taxon>Craniata</taxon>
        <taxon>Vertebrata</taxon>
        <taxon>Euteleostomi</taxon>
        <taxon>Mammalia</taxon>
        <taxon>Eutheria</taxon>
        <taxon>Euarchontoglires</taxon>
        <taxon>Glires</taxon>
        <taxon>Rodentia</taxon>
        <taxon>Myomorpha</taxon>
        <taxon>Muroidea</taxon>
        <taxon>Muridae</taxon>
        <taxon>Murinae</taxon>
        <taxon>Mus</taxon>
        <taxon>Mus</taxon>
    </lineage>
</organism>
<proteinExistence type="evidence at protein level"/>
<dbReference type="EC" id="1.2.1.88"/>
<dbReference type="EMBL" id="AK044712">
    <property type="protein sequence ID" value="BAC32045.1"/>
    <property type="molecule type" value="mRNA"/>
</dbReference>
<dbReference type="EMBL" id="AL831790">
    <property type="status" value="NOT_ANNOTATED_CDS"/>
    <property type="molecule type" value="Genomic_DNA"/>
</dbReference>
<dbReference type="EMBL" id="CH466615">
    <property type="protein sequence ID" value="EDL13315.1"/>
    <property type="molecule type" value="Genomic_DNA"/>
</dbReference>
<dbReference type="EMBL" id="BC024133">
    <property type="protein sequence ID" value="AAH24133.1"/>
    <property type="molecule type" value="mRNA"/>
</dbReference>
<dbReference type="EMBL" id="BC026589">
    <property type="protein sequence ID" value="AAH26589.1"/>
    <property type="molecule type" value="mRNA"/>
</dbReference>
<dbReference type="EMBL" id="BC039281">
    <property type="protein sequence ID" value="AAH39281.2"/>
    <property type="molecule type" value="mRNA"/>
</dbReference>
<dbReference type="EMBL" id="BC056226">
    <property type="protein sequence ID" value="AAH56226.1"/>
    <property type="molecule type" value="mRNA"/>
</dbReference>
<dbReference type="CCDS" id="CCDS18848.1"/>
<dbReference type="RefSeq" id="NP_780647.3">
    <property type="nucleotide sequence ID" value="NM_175438.4"/>
</dbReference>
<dbReference type="PDB" id="3V9J">
    <property type="method" value="X-ray"/>
    <property type="resolution" value="1.30 A"/>
    <property type="chains" value="A/B=21-562"/>
</dbReference>
<dbReference type="PDB" id="3V9K">
    <property type="method" value="X-ray"/>
    <property type="resolution" value="1.50 A"/>
    <property type="chains" value="A/B=21-562"/>
</dbReference>
<dbReference type="PDB" id="3V9L">
    <property type="method" value="X-ray"/>
    <property type="resolution" value="1.50 A"/>
    <property type="chains" value="A/B=21-562"/>
</dbReference>
<dbReference type="PDB" id="4E3X">
    <property type="method" value="X-ray"/>
    <property type="resolution" value="1.24 A"/>
    <property type="chains" value="A/B=21-562"/>
</dbReference>
<dbReference type="PDB" id="4LGZ">
    <property type="method" value="X-ray"/>
    <property type="resolution" value="1.68 A"/>
    <property type="chains" value="A/B=21-562"/>
</dbReference>
<dbReference type="PDB" id="4LH0">
    <property type="method" value="X-ray"/>
    <property type="resolution" value="1.67 A"/>
    <property type="chains" value="A/B=21-562"/>
</dbReference>
<dbReference type="PDB" id="4LH1">
    <property type="method" value="X-ray"/>
    <property type="resolution" value="1.67 A"/>
    <property type="chains" value="A/B=21-562"/>
</dbReference>
<dbReference type="PDB" id="4LH2">
    <property type="method" value="X-ray"/>
    <property type="resolution" value="1.67 A"/>
    <property type="chains" value="A/B=21-562"/>
</dbReference>
<dbReference type="PDB" id="4LH3">
    <property type="method" value="X-ray"/>
    <property type="resolution" value="1.81 A"/>
    <property type="chains" value="A/B=21-562"/>
</dbReference>
<dbReference type="PDB" id="7MER">
    <property type="method" value="X-ray"/>
    <property type="resolution" value="1.74 A"/>
    <property type="chains" value="A/B=21-562"/>
</dbReference>
<dbReference type="PDB" id="7MES">
    <property type="method" value="X-ray"/>
    <property type="resolution" value="1.37 A"/>
    <property type="chains" value="A/B=21-562"/>
</dbReference>
<dbReference type="PDBsum" id="3V9J"/>
<dbReference type="PDBsum" id="3V9K"/>
<dbReference type="PDBsum" id="3V9L"/>
<dbReference type="PDBsum" id="4E3X"/>
<dbReference type="PDBsum" id="4LGZ"/>
<dbReference type="PDBsum" id="4LH0"/>
<dbReference type="PDBsum" id="4LH1"/>
<dbReference type="PDBsum" id="4LH2"/>
<dbReference type="PDBsum" id="4LH3"/>
<dbReference type="PDBsum" id="7MER"/>
<dbReference type="PDBsum" id="7MES"/>
<dbReference type="SMR" id="Q8CHT0"/>
<dbReference type="BioGRID" id="229346">
    <property type="interactions" value="10"/>
</dbReference>
<dbReference type="FunCoup" id="Q8CHT0">
    <property type="interactions" value="2392"/>
</dbReference>
<dbReference type="IntAct" id="Q8CHT0">
    <property type="interactions" value="3"/>
</dbReference>
<dbReference type="STRING" id="10090.ENSMUSP00000043821"/>
<dbReference type="GlyGen" id="Q8CHT0">
    <property type="glycosylation" value="1 site, 1 O-linked glycan (1 site)"/>
</dbReference>
<dbReference type="iPTMnet" id="Q8CHT0"/>
<dbReference type="PhosphoSitePlus" id="Q8CHT0"/>
<dbReference type="SwissPalm" id="Q8CHT0"/>
<dbReference type="jPOST" id="Q8CHT0"/>
<dbReference type="PaxDb" id="10090-ENSMUSP00000043821"/>
<dbReference type="PeptideAtlas" id="Q8CHT0"/>
<dbReference type="ProteomicsDB" id="281963"/>
<dbReference type="Pumba" id="Q8CHT0"/>
<dbReference type="Antibodypedia" id="1590">
    <property type="antibodies" value="317 antibodies from 31 providers"/>
</dbReference>
<dbReference type="DNASU" id="212647"/>
<dbReference type="Ensembl" id="ENSMUST00000039818.10">
    <property type="protein sequence ID" value="ENSMUSP00000043821.10"/>
    <property type="gene ID" value="ENSMUSG00000028737.16"/>
</dbReference>
<dbReference type="GeneID" id="212647"/>
<dbReference type="KEGG" id="mmu:212647"/>
<dbReference type="UCSC" id="uc012dnu.1">
    <property type="organism name" value="mouse"/>
</dbReference>
<dbReference type="AGR" id="MGI:2443883"/>
<dbReference type="CTD" id="8659"/>
<dbReference type="MGI" id="MGI:2443883">
    <property type="gene designation" value="Aldh4a1"/>
</dbReference>
<dbReference type="VEuPathDB" id="HostDB:ENSMUSG00000028737"/>
<dbReference type="eggNOG" id="KOG2455">
    <property type="taxonomic scope" value="Eukaryota"/>
</dbReference>
<dbReference type="GeneTree" id="ENSGT00560000077335"/>
<dbReference type="HOGENOM" id="CLU_005391_4_1_1"/>
<dbReference type="InParanoid" id="Q8CHT0"/>
<dbReference type="OMA" id="FAGIHFT"/>
<dbReference type="OrthoDB" id="5322683at2759"/>
<dbReference type="PhylomeDB" id="Q8CHT0"/>
<dbReference type="TreeFam" id="TF300481"/>
<dbReference type="BRENDA" id="1.2.1.88">
    <property type="organism ID" value="3474"/>
</dbReference>
<dbReference type="Reactome" id="R-MMU-389661">
    <property type="pathway name" value="Glyoxylate metabolism and glycine degradation"/>
</dbReference>
<dbReference type="Reactome" id="R-MMU-70688">
    <property type="pathway name" value="Proline catabolism"/>
</dbReference>
<dbReference type="UniPathway" id="UPA00261">
    <property type="reaction ID" value="UER00374"/>
</dbReference>
<dbReference type="BioGRID-ORCS" id="212647">
    <property type="hits" value="1 hit in 77 CRISPR screens"/>
</dbReference>
<dbReference type="ChiTaRS" id="Aldh4a1">
    <property type="organism name" value="mouse"/>
</dbReference>
<dbReference type="EvolutionaryTrace" id="Q8CHT0"/>
<dbReference type="PRO" id="PR:Q8CHT0"/>
<dbReference type="Proteomes" id="UP000000589">
    <property type="component" value="Chromosome 4"/>
</dbReference>
<dbReference type="RNAct" id="Q8CHT0">
    <property type="molecule type" value="protein"/>
</dbReference>
<dbReference type="Bgee" id="ENSMUSG00000028737">
    <property type="expression patterns" value="Expressed in right kidney and 174 other cell types or tissues"/>
</dbReference>
<dbReference type="GO" id="GO:0005829">
    <property type="term" value="C:cytosol"/>
    <property type="evidence" value="ECO:0007669"/>
    <property type="project" value="Ensembl"/>
</dbReference>
<dbReference type="GO" id="GO:0005759">
    <property type="term" value="C:mitochondrial matrix"/>
    <property type="evidence" value="ECO:0007669"/>
    <property type="project" value="UniProtKB-SubCell"/>
</dbReference>
<dbReference type="GO" id="GO:0005739">
    <property type="term" value="C:mitochondrion"/>
    <property type="evidence" value="ECO:0007005"/>
    <property type="project" value="MGI"/>
</dbReference>
<dbReference type="GO" id="GO:0003842">
    <property type="term" value="F:1-pyrroline-5-carboxylate dehydrogenase activity"/>
    <property type="evidence" value="ECO:0000314"/>
    <property type="project" value="MGI"/>
</dbReference>
<dbReference type="GO" id="GO:0004029">
    <property type="term" value="F:aldehyde dehydrogenase (NAD+) activity"/>
    <property type="evidence" value="ECO:0007669"/>
    <property type="project" value="Ensembl"/>
</dbReference>
<dbReference type="GO" id="GO:0042802">
    <property type="term" value="F:identical protein binding"/>
    <property type="evidence" value="ECO:0007669"/>
    <property type="project" value="Ensembl"/>
</dbReference>
<dbReference type="GO" id="GO:0010133">
    <property type="term" value="P:proline catabolic process to glutamate"/>
    <property type="evidence" value="ECO:0007669"/>
    <property type="project" value="UniProtKB-UniPathway"/>
</dbReference>
<dbReference type="CDD" id="cd07123">
    <property type="entry name" value="ALDH_F4-17_P5CDH"/>
    <property type="match status" value="1"/>
</dbReference>
<dbReference type="FunFam" id="3.40.605.10:FF:000006">
    <property type="entry name" value="1-pyrroline-5-carboxylate dehydrogenase"/>
    <property type="match status" value="1"/>
</dbReference>
<dbReference type="FunFam" id="3.40.309.10:FF:000005">
    <property type="entry name" value="1-pyrroline-5-carboxylate dehydrogenase 1"/>
    <property type="match status" value="1"/>
</dbReference>
<dbReference type="Gene3D" id="3.40.605.10">
    <property type="entry name" value="Aldehyde Dehydrogenase, Chain A, domain 1"/>
    <property type="match status" value="1"/>
</dbReference>
<dbReference type="Gene3D" id="3.40.309.10">
    <property type="entry name" value="Aldehyde Dehydrogenase, Chain A, domain 2"/>
    <property type="match status" value="1"/>
</dbReference>
<dbReference type="InterPro" id="IPR016161">
    <property type="entry name" value="Ald_DH/histidinol_DH"/>
</dbReference>
<dbReference type="InterPro" id="IPR016163">
    <property type="entry name" value="Ald_DH_C"/>
</dbReference>
<dbReference type="InterPro" id="IPR016160">
    <property type="entry name" value="Ald_DH_CS_CYS"/>
</dbReference>
<dbReference type="InterPro" id="IPR029510">
    <property type="entry name" value="Ald_DH_CS_GLU"/>
</dbReference>
<dbReference type="InterPro" id="IPR016162">
    <property type="entry name" value="Ald_DH_N"/>
</dbReference>
<dbReference type="InterPro" id="IPR015590">
    <property type="entry name" value="Aldehyde_DH_dom"/>
</dbReference>
<dbReference type="InterPro" id="IPR005931">
    <property type="entry name" value="P5CDH/ALDH4A1"/>
</dbReference>
<dbReference type="NCBIfam" id="TIGR01236">
    <property type="entry name" value="D1pyr5carbox1"/>
    <property type="match status" value="1"/>
</dbReference>
<dbReference type="PANTHER" id="PTHR14516">
    <property type="entry name" value="1-PYRROLINE-5-CARBOXYLATE DEHYDROGENASE FAMILY MEMBER"/>
    <property type="match status" value="1"/>
</dbReference>
<dbReference type="PANTHER" id="PTHR14516:SF3">
    <property type="entry name" value="DELTA-1-PYRROLINE-5-CARBOXYLATE DEHYDROGENASE, MITOCHONDRIAL"/>
    <property type="match status" value="1"/>
</dbReference>
<dbReference type="Pfam" id="PF00171">
    <property type="entry name" value="Aldedh"/>
    <property type="match status" value="1"/>
</dbReference>
<dbReference type="SUPFAM" id="SSF53720">
    <property type="entry name" value="ALDH-like"/>
    <property type="match status" value="1"/>
</dbReference>
<dbReference type="PROSITE" id="PS00070">
    <property type="entry name" value="ALDEHYDE_DEHYDR_CYS"/>
    <property type="match status" value="1"/>
</dbReference>
<dbReference type="PROSITE" id="PS00687">
    <property type="entry name" value="ALDEHYDE_DEHYDR_GLU"/>
    <property type="match status" value="1"/>
</dbReference>
<accession>Q8CHT0</accession>
<accession>B1AXW8</accession>
<accession>Q7TND0</accession>
<accession>Q8BXM3</accession>
<accession>Q8R0N1</accession>
<accession>Q8R1S2</accession>
<keyword id="KW-0002">3D-structure</keyword>
<keyword id="KW-0007">Acetylation</keyword>
<keyword id="KW-0496">Mitochondrion</keyword>
<keyword id="KW-0520">NAD</keyword>
<keyword id="KW-0560">Oxidoreductase</keyword>
<keyword id="KW-0597">Phosphoprotein</keyword>
<keyword id="KW-0642">Proline metabolism</keyword>
<keyword id="KW-1185">Reference proteome</keyword>
<keyword id="KW-0809">Transit peptide</keyword>
<comment type="function">
    <text evidence="1">Irreversible conversion of delta-1-pyrroline-5-carboxylate (P5C), derived either from proline or ornithine, to glutamate. This is a necessary step in the pathway interconnecting the urea and tricarboxylic acid cycles. The preferred substrate is glutamic gamma-semialdehyde, other substrates include succinic, glutaric and adipic semialdehydes (By similarity).</text>
</comment>
<comment type="catalytic activity">
    <reaction>
        <text>L-glutamate 5-semialdehyde + NAD(+) + H2O = L-glutamate + NADH + 2 H(+)</text>
        <dbReference type="Rhea" id="RHEA:30235"/>
        <dbReference type="ChEBI" id="CHEBI:15377"/>
        <dbReference type="ChEBI" id="CHEBI:15378"/>
        <dbReference type="ChEBI" id="CHEBI:29985"/>
        <dbReference type="ChEBI" id="CHEBI:57540"/>
        <dbReference type="ChEBI" id="CHEBI:57945"/>
        <dbReference type="ChEBI" id="CHEBI:58066"/>
        <dbReference type="EC" id="1.2.1.88"/>
    </reaction>
</comment>
<comment type="pathway">
    <text>Amino-acid degradation; L-proline degradation into L-glutamate; L-glutamate from L-proline: step 2/2.</text>
</comment>
<comment type="subunit">
    <text evidence="5">Homodimer.</text>
</comment>
<comment type="subcellular location">
    <subcellularLocation>
        <location evidence="1">Mitochondrion matrix</location>
    </subcellularLocation>
</comment>
<comment type="PTM">
    <text>Acetylation of Lys-98, Lys-113 and Lys-401 is observed in liver mitochondria from fasted mice but not from fed mice.</text>
</comment>
<comment type="similarity">
    <text evidence="6">Belongs to the aldehyde dehydrogenase family.</text>
</comment>
<reference key="1">
    <citation type="journal article" date="2005" name="Science">
        <title>The transcriptional landscape of the mammalian genome.</title>
        <authorList>
            <person name="Carninci P."/>
            <person name="Kasukawa T."/>
            <person name="Katayama S."/>
            <person name="Gough J."/>
            <person name="Frith M.C."/>
            <person name="Maeda N."/>
            <person name="Oyama R."/>
            <person name="Ravasi T."/>
            <person name="Lenhard B."/>
            <person name="Wells C."/>
            <person name="Kodzius R."/>
            <person name="Shimokawa K."/>
            <person name="Bajic V.B."/>
            <person name="Brenner S.E."/>
            <person name="Batalov S."/>
            <person name="Forrest A.R."/>
            <person name="Zavolan M."/>
            <person name="Davis M.J."/>
            <person name="Wilming L.G."/>
            <person name="Aidinis V."/>
            <person name="Allen J.E."/>
            <person name="Ambesi-Impiombato A."/>
            <person name="Apweiler R."/>
            <person name="Aturaliya R.N."/>
            <person name="Bailey T.L."/>
            <person name="Bansal M."/>
            <person name="Baxter L."/>
            <person name="Beisel K.W."/>
            <person name="Bersano T."/>
            <person name="Bono H."/>
            <person name="Chalk A.M."/>
            <person name="Chiu K.P."/>
            <person name="Choudhary V."/>
            <person name="Christoffels A."/>
            <person name="Clutterbuck D.R."/>
            <person name="Crowe M.L."/>
            <person name="Dalla E."/>
            <person name="Dalrymple B.P."/>
            <person name="de Bono B."/>
            <person name="Della Gatta G."/>
            <person name="di Bernardo D."/>
            <person name="Down T."/>
            <person name="Engstrom P."/>
            <person name="Fagiolini M."/>
            <person name="Faulkner G."/>
            <person name="Fletcher C.F."/>
            <person name="Fukushima T."/>
            <person name="Furuno M."/>
            <person name="Futaki S."/>
            <person name="Gariboldi M."/>
            <person name="Georgii-Hemming P."/>
            <person name="Gingeras T.R."/>
            <person name="Gojobori T."/>
            <person name="Green R.E."/>
            <person name="Gustincich S."/>
            <person name="Harbers M."/>
            <person name="Hayashi Y."/>
            <person name="Hensch T.K."/>
            <person name="Hirokawa N."/>
            <person name="Hill D."/>
            <person name="Huminiecki L."/>
            <person name="Iacono M."/>
            <person name="Ikeo K."/>
            <person name="Iwama A."/>
            <person name="Ishikawa T."/>
            <person name="Jakt M."/>
            <person name="Kanapin A."/>
            <person name="Katoh M."/>
            <person name="Kawasawa Y."/>
            <person name="Kelso J."/>
            <person name="Kitamura H."/>
            <person name="Kitano H."/>
            <person name="Kollias G."/>
            <person name="Krishnan S.P."/>
            <person name="Kruger A."/>
            <person name="Kummerfeld S.K."/>
            <person name="Kurochkin I.V."/>
            <person name="Lareau L.F."/>
            <person name="Lazarevic D."/>
            <person name="Lipovich L."/>
            <person name="Liu J."/>
            <person name="Liuni S."/>
            <person name="McWilliam S."/>
            <person name="Madan Babu M."/>
            <person name="Madera M."/>
            <person name="Marchionni L."/>
            <person name="Matsuda H."/>
            <person name="Matsuzawa S."/>
            <person name="Miki H."/>
            <person name="Mignone F."/>
            <person name="Miyake S."/>
            <person name="Morris K."/>
            <person name="Mottagui-Tabar S."/>
            <person name="Mulder N."/>
            <person name="Nakano N."/>
            <person name="Nakauchi H."/>
            <person name="Ng P."/>
            <person name="Nilsson R."/>
            <person name="Nishiguchi S."/>
            <person name="Nishikawa S."/>
            <person name="Nori F."/>
            <person name="Ohara O."/>
            <person name="Okazaki Y."/>
            <person name="Orlando V."/>
            <person name="Pang K.C."/>
            <person name="Pavan W.J."/>
            <person name="Pavesi G."/>
            <person name="Pesole G."/>
            <person name="Petrovsky N."/>
            <person name="Piazza S."/>
            <person name="Reed J."/>
            <person name="Reid J.F."/>
            <person name="Ring B.Z."/>
            <person name="Ringwald M."/>
            <person name="Rost B."/>
            <person name="Ruan Y."/>
            <person name="Salzberg S.L."/>
            <person name="Sandelin A."/>
            <person name="Schneider C."/>
            <person name="Schoenbach C."/>
            <person name="Sekiguchi K."/>
            <person name="Semple C.A."/>
            <person name="Seno S."/>
            <person name="Sessa L."/>
            <person name="Sheng Y."/>
            <person name="Shibata Y."/>
            <person name="Shimada H."/>
            <person name="Shimada K."/>
            <person name="Silva D."/>
            <person name="Sinclair B."/>
            <person name="Sperling S."/>
            <person name="Stupka E."/>
            <person name="Sugiura K."/>
            <person name="Sultana R."/>
            <person name="Takenaka Y."/>
            <person name="Taki K."/>
            <person name="Tammoja K."/>
            <person name="Tan S.L."/>
            <person name="Tang S."/>
            <person name="Taylor M.S."/>
            <person name="Tegner J."/>
            <person name="Teichmann S.A."/>
            <person name="Ueda H.R."/>
            <person name="van Nimwegen E."/>
            <person name="Verardo R."/>
            <person name="Wei C.L."/>
            <person name="Yagi K."/>
            <person name="Yamanishi H."/>
            <person name="Zabarovsky E."/>
            <person name="Zhu S."/>
            <person name="Zimmer A."/>
            <person name="Hide W."/>
            <person name="Bult C."/>
            <person name="Grimmond S.M."/>
            <person name="Teasdale R.D."/>
            <person name="Liu E.T."/>
            <person name="Brusic V."/>
            <person name="Quackenbush J."/>
            <person name="Wahlestedt C."/>
            <person name="Mattick J.S."/>
            <person name="Hume D.A."/>
            <person name="Kai C."/>
            <person name="Sasaki D."/>
            <person name="Tomaru Y."/>
            <person name="Fukuda S."/>
            <person name="Kanamori-Katayama M."/>
            <person name="Suzuki M."/>
            <person name="Aoki J."/>
            <person name="Arakawa T."/>
            <person name="Iida J."/>
            <person name="Imamura K."/>
            <person name="Itoh M."/>
            <person name="Kato T."/>
            <person name="Kawaji H."/>
            <person name="Kawagashira N."/>
            <person name="Kawashima T."/>
            <person name="Kojima M."/>
            <person name="Kondo S."/>
            <person name="Konno H."/>
            <person name="Nakano K."/>
            <person name="Ninomiya N."/>
            <person name="Nishio T."/>
            <person name="Okada M."/>
            <person name="Plessy C."/>
            <person name="Shibata K."/>
            <person name="Shiraki T."/>
            <person name="Suzuki S."/>
            <person name="Tagami M."/>
            <person name="Waki K."/>
            <person name="Watahiki A."/>
            <person name="Okamura-Oho Y."/>
            <person name="Suzuki H."/>
            <person name="Kawai J."/>
            <person name="Hayashizaki Y."/>
        </authorList>
    </citation>
    <scope>NUCLEOTIDE SEQUENCE [LARGE SCALE MRNA]</scope>
    <source>
        <strain>C57BL/6J</strain>
        <tissue>Retina</tissue>
    </source>
</reference>
<reference key="2">
    <citation type="journal article" date="2009" name="PLoS Biol.">
        <title>Lineage-specific biology revealed by a finished genome assembly of the mouse.</title>
        <authorList>
            <person name="Church D.M."/>
            <person name="Goodstadt L."/>
            <person name="Hillier L.W."/>
            <person name="Zody M.C."/>
            <person name="Goldstein S."/>
            <person name="She X."/>
            <person name="Bult C.J."/>
            <person name="Agarwala R."/>
            <person name="Cherry J.L."/>
            <person name="DiCuccio M."/>
            <person name="Hlavina W."/>
            <person name="Kapustin Y."/>
            <person name="Meric P."/>
            <person name="Maglott D."/>
            <person name="Birtle Z."/>
            <person name="Marques A.C."/>
            <person name="Graves T."/>
            <person name="Zhou S."/>
            <person name="Teague B."/>
            <person name="Potamousis K."/>
            <person name="Churas C."/>
            <person name="Place M."/>
            <person name="Herschleb J."/>
            <person name="Runnheim R."/>
            <person name="Forrest D."/>
            <person name="Amos-Landgraf J."/>
            <person name="Schwartz D.C."/>
            <person name="Cheng Z."/>
            <person name="Lindblad-Toh K."/>
            <person name="Eichler E.E."/>
            <person name="Ponting C.P."/>
        </authorList>
    </citation>
    <scope>NUCLEOTIDE SEQUENCE [LARGE SCALE GENOMIC DNA]</scope>
    <source>
        <strain>C57BL/6J</strain>
    </source>
</reference>
<reference key="3">
    <citation type="submission" date="2005-07" db="EMBL/GenBank/DDBJ databases">
        <authorList>
            <person name="Mural R.J."/>
            <person name="Adams M.D."/>
            <person name="Myers E.W."/>
            <person name="Smith H.O."/>
            <person name="Venter J.C."/>
        </authorList>
    </citation>
    <scope>NUCLEOTIDE SEQUENCE [LARGE SCALE GENOMIC DNA]</scope>
</reference>
<reference key="4">
    <citation type="journal article" date="2004" name="Genome Res.">
        <title>The status, quality, and expansion of the NIH full-length cDNA project: the Mammalian Gene Collection (MGC).</title>
        <authorList>
            <consortium name="The MGC Project Team"/>
        </authorList>
    </citation>
    <scope>NUCLEOTIDE SEQUENCE [LARGE SCALE MRNA]</scope>
    <source>
        <strain>FVB/N</strain>
        <tissue>Kidney</tissue>
        <tissue>Liver</tissue>
    </source>
</reference>
<reference key="5">
    <citation type="journal article" date="2010" name="Cell">
        <title>A tissue-specific atlas of mouse protein phosphorylation and expression.</title>
        <authorList>
            <person name="Huttlin E.L."/>
            <person name="Jedrychowski M.P."/>
            <person name="Elias J.E."/>
            <person name="Goswami T."/>
            <person name="Rad R."/>
            <person name="Beausoleil S.A."/>
            <person name="Villen J."/>
            <person name="Haas W."/>
            <person name="Sowa M.E."/>
            <person name="Gygi S.P."/>
        </authorList>
    </citation>
    <scope>IDENTIFICATION BY MASS SPECTROMETRY [LARGE SCALE ANALYSIS]</scope>
    <source>
        <tissue>Brain</tissue>
        <tissue>Brown adipose tissue</tissue>
        <tissue>Heart</tissue>
        <tissue>Kidney</tissue>
        <tissue>Liver</tissue>
        <tissue>Lung</tissue>
        <tissue>Pancreas</tissue>
        <tissue>Spleen</tissue>
        <tissue>Testis</tissue>
    </source>
</reference>
<reference key="6">
    <citation type="journal article" date="2013" name="Mol. Cell">
        <title>SIRT5-mediated lysine desuccinylation impacts diverse metabolic pathways.</title>
        <authorList>
            <person name="Park J."/>
            <person name="Chen Y."/>
            <person name="Tishkoff D.X."/>
            <person name="Peng C."/>
            <person name="Tan M."/>
            <person name="Dai L."/>
            <person name="Xie Z."/>
            <person name="Zhang Y."/>
            <person name="Zwaans B.M."/>
            <person name="Skinner M.E."/>
            <person name="Lombard D.B."/>
            <person name="Zhao Y."/>
        </authorList>
    </citation>
    <scope>SUCCINYLATION [LARGE SCALE ANALYSIS] AT LYS-30; LYS-92; LYS-98; LYS-113; LYS-129; LYS-174; LYS-346; LYS-357; LYS-394 AND LYS-508</scope>
    <scope>IDENTIFICATION BY MASS SPECTROMETRY [LARGE SCALE ANALYSIS]</scope>
    <source>
        <tissue>Liver</tissue>
    </source>
</reference>
<reference key="7">
    <citation type="journal article" date="2013" name="Proc. Natl. Acad. Sci. U.S.A.">
        <title>Label-free quantitative proteomics of the lysine acetylome in mitochondria identifies substrates of SIRT3 in metabolic pathways.</title>
        <authorList>
            <person name="Rardin M.J."/>
            <person name="Newman J.C."/>
            <person name="Held J.M."/>
            <person name="Cusack M.P."/>
            <person name="Sorensen D.J."/>
            <person name="Li B."/>
            <person name="Schilling B."/>
            <person name="Mooney S.D."/>
            <person name="Kahn C.R."/>
            <person name="Verdin E."/>
            <person name="Gibson B.W."/>
        </authorList>
    </citation>
    <scope>ACETYLATION [LARGE SCALE ANALYSIS] AT LYS-51; LYS-92; LYS-98; LYS-113; LYS-129; LYS-174; LYS-317; LYS-357; LYS-364; LYS-375; LYS-461; LYS-508; LYS-530 AND LYS-551</scope>
    <scope>IDENTIFICATION BY MASS SPECTROMETRY [LARGE SCALE ANALYSIS]</scope>
    <source>
        <tissue>Liver</tissue>
    </source>
</reference>
<reference key="8">
    <citation type="journal article" date="2012" name="Acta Crystallogr. D">
        <title>Proline: Mother Nature's cryoprotectant applied to protein crystallography.</title>
        <authorList>
            <person name="Pemberton T.A."/>
            <person name="Still B.R."/>
            <person name="Christensen E.M."/>
            <person name="Singh H."/>
            <person name="Srivastava D."/>
            <person name="Tanner J.J."/>
        </authorList>
    </citation>
    <scope>X-RAY CRYSTALLOGRAPHY (1.24 ANGSTROMS) OF 21-562</scope>
</reference>
<reference key="9">
    <citation type="journal article" date="2012" name="J. Mol. Biol.">
        <title>The three-dimensional structural basis of type II hyperprolinemia.</title>
        <authorList>
            <person name="Srivastava D."/>
            <person name="Singh R.K."/>
            <person name="Moxley M.A."/>
            <person name="Henzl M.T."/>
            <person name="Becker D.F."/>
            <person name="Tanner J.J."/>
        </authorList>
    </citation>
    <scope>X-RAY CRYSTALLOGRAPHY (1.30 ANGSTROMS) OF 21-562 IN COMPLEXES WITH GLUTAMATE AND NAD</scope>
    <scope>SUBUNIT</scope>
    <scope>ACTIVE SITE</scope>
</reference>
<evidence type="ECO:0000250" key="1"/>
<evidence type="ECO:0000250" key="2">
    <source>
        <dbReference type="UniProtKB" id="P30038"/>
    </source>
</evidence>
<evidence type="ECO:0000255" key="3">
    <source>
        <dbReference type="PROSITE-ProRule" id="PRU10007"/>
    </source>
</evidence>
<evidence type="ECO:0000255" key="4">
    <source>
        <dbReference type="PROSITE-ProRule" id="PRU10008"/>
    </source>
</evidence>
<evidence type="ECO:0000269" key="5">
    <source>
    </source>
</evidence>
<evidence type="ECO:0000305" key="6"/>
<evidence type="ECO:0007744" key="7">
    <source>
    </source>
</evidence>
<evidence type="ECO:0007744" key="8">
    <source>
    </source>
</evidence>
<evidence type="ECO:0007829" key="9">
    <source>
        <dbReference type="PDB" id="3V9J"/>
    </source>
</evidence>
<evidence type="ECO:0007829" key="10">
    <source>
        <dbReference type="PDB" id="4E3X"/>
    </source>
</evidence>
<name>AL4A1_MOUSE</name>
<gene>
    <name type="primary">Aldh4a1</name>
</gene>